<protein>
    <recommendedName>
        <fullName evidence="1">S-adenosylmethionine:tRNA ribosyltransferase-isomerase</fullName>
        <ecNumber evidence="1">2.4.99.17</ecNumber>
    </recommendedName>
    <alternativeName>
        <fullName evidence="1">Queuosine biosynthesis protein QueA</fullName>
    </alternativeName>
</protein>
<organism>
    <name type="scientific">Shewanella halifaxensis (strain HAW-EB4)</name>
    <dbReference type="NCBI Taxonomy" id="458817"/>
    <lineage>
        <taxon>Bacteria</taxon>
        <taxon>Pseudomonadati</taxon>
        <taxon>Pseudomonadota</taxon>
        <taxon>Gammaproteobacteria</taxon>
        <taxon>Alteromonadales</taxon>
        <taxon>Shewanellaceae</taxon>
        <taxon>Shewanella</taxon>
    </lineage>
</organism>
<gene>
    <name evidence="1" type="primary">queA</name>
    <name type="ordered locus">Shal_1553</name>
</gene>
<comment type="function">
    <text evidence="1">Transfers and isomerizes the ribose moiety from AdoMet to the 7-aminomethyl group of 7-deazaguanine (preQ1-tRNA) to give epoxyqueuosine (oQ-tRNA).</text>
</comment>
<comment type="catalytic activity">
    <reaction evidence="1">
        <text>7-aminomethyl-7-carbaguanosine(34) in tRNA + S-adenosyl-L-methionine = epoxyqueuosine(34) in tRNA + adenine + L-methionine + 2 H(+)</text>
        <dbReference type="Rhea" id="RHEA:32155"/>
        <dbReference type="Rhea" id="RHEA-COMP:10342"/>
        <dbReference type="Rhea" id="RHEA-COMP:18582"/>
        <dbReference type="ChEBI" id="CHEBI:15378"/>
        <dbReference type="ChEBI" id="CHEBI:16708"/>
        <dbReference type="ChEBI" id="CHEBI:57844"/>
        <dbReference type="ChEBI" id="CHEBI:59789"/>
        <dbReference type="ChEBI" id="CHEBI:82833"/>
        <dbReference type="ChEBI" id="CHEBI:194443"/>
        <dbReference type="EC" id="2.4.99.17"/>
    </reaction>
</comment>
<comment type="pathway">
    <text evidence="1">tRNA modification; tRNA-queuosine biosynthesis.</text>
</comment>
<comment type="subunit">
    <text evidence="1">Monomer.</text>
</comment>
<comment type="subcellular location">
    <subcellularLocation>
        <location evidence="1">Cytoplasm</location>
    </subcellularLocation>
</comment>
<comment type="similarity">
    <text evidence="1">Belongs to the QueA family.</text>
</comment>
<evidence type="ECO:0000255" key="1">
    <source>
        <dbReference type="HAMAP-Rule" id="MF_00113"/>
    </source>
</evidence>
<reference key="1">
    <citation type="submission" date="2008-01" db="EMBL/GenBank/DDBJ databases">
        <title>Complete sequence of Shewanella halifaxensis HAW-EB4.</title>
        <authorList>
            <consortium name="US DOE Joint Genome Institute"/>
            <person name="Copeland A."/>
            <person name="Lucas S."/>
            <person name="Lapidus A."/>
            <person name="Glavina del Rio T."/>
            <person name="Dalin E."/>
            <person name="Tice H."/>
            <person name="Bruce D."/>
            <person name="Goodwin L."/>
            <person name="Pitluck S."/>
            <person name="Sims D."/>
            <person name="Brettin T."/>
            <person name="Detter J.C."/>
            <person name="Han C."/>
            <person name="Kuske C.R."/>
            <person name="Schmutz J."/>
            <person name="Larimer F."/>
            <person name="Land M."/>
            <person name="Hauser L."/>
            <person name="Kyrpides N."/>
            <person name="Kim E."/>
            <person name="Zhao J.-S."/>
            <person name="Richardson P."/>
        </authorList>
    </citation>
    <scope>NUCLEOTIDE SEQUENCE [LARGE SCALE GENOMIC DNA]</scope>
    <source>
        <strain>HAW-EB4</strain>
    </source>
</reference>
<proteinExistence type="inferred from homology"/>
<keyword id="KW-0963">Cytoplasm</keyword>
<keyword id="KW-0671">Queuosine biosynthesis</keyword>
<keyword id="KW-0949">S-adenosyl-L-methionine</keyword>
<keyword id="KW-0808">Transferase</keyword>
<accession>B0TND3</accession>
<dbReference type="EC" id="2.4.99.17" evidence="1"/>
<dbReference type="EMBL" id="CP000931">
    <property type="protein sequence ID" value="ABZ76119.1"/>
    <property type="molecule type" value="Genomic_DNA"/>
</dbReference>
<dbReference type="RefSeq" id="WP_012276659.1">
    <property type="nucleotide sequence ID" value="NC_010334.1"/>
</dbReference>
<dbReference type="SMR" id="B0TND3"/>
<dbReference type="STRING" id="458817.Shal_1553"/>
<dbReference type="KEGG" id="shl:Shal_1553"/>
<dbReference type="eggNOG" id="COG0809">
    <property type="taxonomic scope" value="Bacteria"/>
</dbReference>
<dbReference type="HOGENOM" id="CLU_039110_1_0_6"/>
<dbReference type="OrthoDB" id="9805933at2"/>
<dbReference type="UniPathway" id="UPA00392"/>
<dbReference type="Proteomes" id="UP000001317">
    <property type="component" value="Chromosome"/>
</dbReference>
<dbReference type="GO" id="GO:0005737">
    <property type="term" value="C:cytoplasm"/>
    <property type="evidence" value="ECO:0007669"/>
    <property type="project" value="UniProtKB-SubCell"/>
</dbReference>
<dbReference type="GO" id="GO:0051075">
    <property type="term" value="F:S-adenosylmethionine:tRNA ribosyltransferase-isomerase activity"/>
    <property type="evidence" value="ECO:0007669"/>
    <property type="project" value="UniProtKB-EC"/>
</dbReference>
<dbReference type="GO" id="GO:0008616">
    <property type="term" value="P:queuosine biosynthetic process"/>
    <property type="evidence" value="ECO:0007669"/>
    <property type="project" value="UniProtKB-UniRule"/>
</dbReference>
<dbReference type="GO" id="GO:0002099">
    <property type="term" value="P:tRNA wobble guanine modification"/>
    <property type="evidence" value="ECO:0007669"/>
    <property type="project" value="TreeGrafter"/>
</dbReference>
<dbReference type="FunFam" id="2.40.10.240:FF:000001">
    <property type="entry name" value="S-adenosylmethionine:tRNA ribosyltransferase-isomerase"/>
    <property type="match status" value="1"/>
</dbReference>
<dbReference type="FunFam" id="3.40.1780.10:FF:000001">
    <property type="entry name" value="S-adenosylmethionine:tRNA ribosyltransferase-isomerase"/>
    <property type="match status" value="1"/>
</dbReference>
<dbReference type="Gene3D" id="2.40.10.240">
    <property type="entry name" value="QueA-like"/>
    <property type="match status" value="1"/>
</dbReference>
<dbReference type="Gene3D" id="3.40.1780.10">
    <property type="entry name" value="QueA-like"/>
    <property type="match status" value="1"/>
</dbReference>
<dbReference type="HAMAP" id="MF_00113">
    <property type="entry name" value="QueA"/>
    <property type="match status" value="1"/>
</dbReference>
<dbReference type="InterPro" id="IPR003699">
    <property type="entry name" value="QueA"/>
</dbReference>
<dbReference type="InterPro" id="IPR042118">
    <property type="entry name" value="QueA_dom1"/>
</dbReference>
<dbReference type="InterPro" id="IPR042119">
    <property type="entry name" value="QueA_dom2"/>
</dbReference>
<dbReference type="InterPro" id="IPR036100">
    <property type="entry name" value="QueA_sf"/>
</dbReference>
<dbReference type="NCBIfam" id="NF001140">
    <property type="entry name" value="PRK00147.1"/>
    <property type="match status" value="1"/>
</dbReference>
<dbReference type="NCBIfam" id="TIGR00113">
    <property type="entry name" value="queA"/>
    <property type="match status" value="1"/>
</dbReference>
<dbReference type="PANTHER" id="PTHR30307">
    <property type="entry name" value="S-ADENOSYLMETHIONINE:TRNA RIBOSYLTRANSFERASE-ISOMERASE"/>
    <property type="match status" value="1"/>
</dbReference>
<dbReference type="PANTHER" id="PTHR30307:SF0">
    <property type="entry name" value="S-ADENOSYLMETHIONINE:TRNA RIBOSYLTRANSFERASE-ISOMERASE"/>
    <property type="match status" value="1"/>
</dbReference>
<dbReference type="Pfam" id="PF02547">
    <property type="entry name" value="Queuosine_synth"/>
    <property type="match status" value="1"/>
</dbReference>
<dbReference type="SUPFAM" id="SSF111337">
    <property type="entry name" value="QueA-like"/>
    <property type="match status" value="1"/>
</dbReference>
<name>QUEA_SHEHH</name>
<feature type="chain" id="PRO_1000076019" description="S-adenosylmethionine:tRNA ribosyltransferase-isomerase">
    <location>
        <begin position="1"/>
        <end position="345"/>
    </location>
</feature>
<sequence length="345" mass="38398">MRVADFSFELPDELIARYPTAERTASRLLSLDGNSGELTDLQFTDILEQVNLGDLMVFNNTRVIPARMFGQKQSGGKLEILVERMLDDKRVLAHVRCSKSPKVDSIICLDGGYEMIMVARHDALFELELQSDKTILEVLEDVGHMPLPPYIDRPDEDADKERYQTVYNQNPGAVAAPTAGLHFDDAMLAALKDKGVNTAFVTLHVGAGTFQPVRVDNILDHKMHSEWAEVPQNVVDLIAETKTRGNRVIAVGTTSVRSLESAAKASPEQLEAFSGDTDIFIYPGYQFQVVDAMVTNFHLPESTLIMLLSAFAGFDEVKNAYQHAIAQKYRFFSYGDAMFVTKKAN</sequence>